<comment type="function">
    <text evidence="1">Involved in ammonium transport.</text>
</comment>
<comment type="subcellular location">
    <subcellularLocation>
        <location evidence="4">Membrane</location>
        <topology evidence="4">Multi-pass membrane protein</topology>
    </subcellularLocation>
</comment>
<comment type="tissue specificity">
    <text>Expressed in root.</text>
</comment>
<comment type="similarity">
    <text evidence="4">Belongs to the ammonia transporter channel (TC 1.A.11.2) family.</text>
</comment>
<dbReference type="EMBL" id="AB083582">
    <property type="protein sequence ID" value="BAC65232.1"/>
    <property type="molecule type" value="mRNA"/>
</dbReference>
<dbReference type="EMBL" id="AP008207">
    <property type="protein sequence ID" value="BAF06846.1"/>
    <property type="molecule type" value="Genomic_DNA"/>
</dbReference>
<dbReference type="EMBL" id="AP014957">
    <property type="protein sequence ID" value="BAS75436.1"/>
    <property type="molecule type" value="Genomic_DNA"/>
</dbReference>
<dbReference type="EMBL" id="CM000138">
    <property type="protein sequence ID" value="EAZ14307.1"/>
    <property type="molecule type" value="Genomic_DNA"/>
</dbReference>
<dbReference type="EMBL" id="AK120352">
    <property type="protein sequence ID" value="BAG99977.1"/>
    <property type="molecule type" value="mRNA"/>
</dbReference>
<dbReference type="RefSeq" id="XP_015622013.1">
    <property type="nucleotide sequence ID" value="XM_015766527.1"/>
</dbReference>
<dbReference type="RefSeq" id="XP_015622014.1">
    <property type="nucleotide sequence ID" value="XM_015766528.1"/>
</dbReference>
<dbReference type="RefSeq" id="XP_015622015.1">
    <property type="nucleotide sequence ID" value="XM_015766529.1"/>
</dbReference>
<dbReference type="RefSeq" id="XP_015622016.1">
    <property type="nucleotide sequence ID" value="XM_015766530.1"/>
</dbReference>
<dbReference type="SMR" id="Q84KJ6"/>
<dbReference type="FunCoup" id="Q84KJ6">
    <property type="interactions" value="279"/>
</dbReference>
<dbReference type="STRING" id="39947.Q84KJ6"/>
<dbReference type="PaxDb" id="39947-Q84KJ6"/>
<dbReference type="EnsemblPlants" id="Os01t0870300-02">
    <property type="protein sequence ID" value="Os01t0870300-02"/>
    <property type="gene ID" value="Os01g0870300"/>
</dbReference>
<dbReference type="Gramene" id="Os01t0870300-02">
    <property type="protein sequence ID" value="Os01t0870300-02"/>
    <property type="gene ID" value="Os01g0870300"/>
</dbReference>
<dbReference type="KEGG" id="dosa:Os01g0870300"/>
<dbReference type="eggNOG" id="KOG0682">
    <property type="taxonomic scope" value="Eukaryota"/>
</dbReference>
<dbReference type="HOGENOM" id="CLU_000445_33_4_1"/>
<dbReference type="InParanoid" id="Q84KJ6"/>
<dbReference type="OMA" id="GFPTTPM"/>
<dbReference type="OrthoDB" id="534912at2759"/>
<dbReference type="BioCyc" id="MetaCyc:MONOMER-14092"/>
<dbReference type="Proteomes" id="UP000000763">
    <property type="component" value="Chromosome 1"/>
</dbReference>
<dbReference type="Proteomes" id="UP000007752">
    <property type="component" value="Chromosome 1"/>
</dbReference>
<dbReference type="Proteomes" id="UP000059680">
    <property type="component" value="Chromosome 1"/>
</dbReference>
<dbReference type="ExpressionAtlas" id="Q84KJ6">
    <property type="expression patterns" value="baseline and differential"/>
</dbReference>
<dbReference type="GO" id="GO:0005886">
    <property type="term" value="C:plasma membrane"/>
    <property type="evidence" value="ECO:0000318"/>
    <property type="project" value="GO_Central"/>
</dbReference>
<dbReference type="GO" id="GO:0008519">
    <property type="term" value="F:ammonium channel activity"/>
    <property type="evidence" value="ECO:0000318"/>
    <property type="project" value="GO_Central"/>
</dbReference>
<dbReference type="GO" id="GO:0072488">
    <property type="term" value="P:ammonium transmembrane transport"/>
    <property type="evidence" value="ECO:0000318"/>
    <property type="project" value="GO_Central"/>
</dbReference>
<dbReference type="FunFam" id="1.10.3430.10:FF:000005">
    <property type="entry name" value="Ammonium transporter"/>
    <property type="match status" value="1"/>
</dbReference>
<dbReference type="Gene3D" id="1.10.3430.10">
    <property type="entry name" value="Ammonium transporter AmtB like domains"/>
    <property type="match status" value="1"/>
</dbReference>
<dbReference type="InterPro" id="IPR029020">
    <property type="entry name" value="Ammonium/urea_transptr"/>
</dbReference>
<dbReference type="InterPro" id="IPR001905">
    <property type="entry name" value="Ammonium_transpt"/>
</dbReference>
<dbReference type="InterPro" id="IPR018047">
    <property type="entry name" value="Ammonium_transpt_CS"/>
</dbReference>
<dbReference type="InterPro" id="IPR024041">
    <property type="entry name" value="NH4_transpt_AmtB-like_dom"/>
</dbReference>
<dbReference type="NCBIfam" id="TIGR00836">
    <property type="entry name" value="amt"/>
    <property type="match status" value="1"/>
</dbReference>
<dbReference type="PANTHER" id="PTHR43029">
    <property type="entry name" value="AMMONIUM TRANSPORTER MEP2"/>
    <property type="match status" value="1"/>
</dbReference>
<dbReference type="PANTHER" id="PTHR43029:SF10">
    <property type="entry name" value="AMMONIUM TRANSPORTER MEP2"/>
    <property type="match status" value="1"/>
</dbReference>
<dbReference type="Pfam" id="PF00909">
    <property type="entry name" value="Ammonium_transp"/>
    <property type="match status" value="1"/>
</dbReference>
<dbReference type="SUPFAM" id="SSF111352">
    <property type="entry name" value="Ammonium transporter"/>
    <property type="match status" value="1"/>
</dbReference>
<dbReference type="PROSITE" id="PS01219">
    <property type="entry name" value="AMMONIUM_TRANSP"/>
    <property type="match status" value="1"/>
</dbReference>
<organism>
    <name type="scientific">Oryza sativa subsp. japonica</name>
    <name type="common">Rice</name>
    <dbReference type="NCBI Taxonomy" id="39947"/>
    <lineage>
        <taxon>Eukaryota</taxon>
        <taxon>Viridiplantae</taxon>
        <taxon>Streptophyta</taxon>
        <taxon>Embryophyta</taxon>
        <taxon>Tracheophyta</taxon>
        <taxon>Spermatophyta</taxon>
        <taxon>Magnoliopsida</taxon>
        <taxon>Liliopsida</taxon>
        <taxon>Poales</taxon>
        <taxon>Poaceae</taxon>
        <taxon>BOP clade</taxon>
        <taxon>Oryzoideae</taxon>
        <taxon>Oryzeae</taxon>
        <taxon>Oryzinae</taxon>
        <taxon>Oryza</taxon>
        <taxon>Oryza sativa</taxon>
    </lineage>
</organism>
<accession>Q84KJ6</accession>
<accession>A0A0P0VAU4</accession>
<keyword id="KW-0924">Ammonia transport</keyword>
<keyword id="KW-0472">Membrane</keyword>
<keyword id="KW-1185">Reference proteome</keyword>
<keyword id="KW-0812">Transmembrane</keyword>
<keyword id="KW-1133">Transmembrane helix</keyword>
<keyword id="KW-0813">Transport</keyword>
<feature type="chain" id="PRO_0000385650" description="Ammonium transporter 3 member 1">
    <location>
        <begin position="1"/>
        <end position="498"/>
    </location>
</feature>
<feature type="transmembrane region" description="Helical" evidence="2">
    <location>
        <begin position="33"/>
        <end position="53"/>
    </location>
</feature>
<feature type="transmembrane region" description="Helical" evidence="2">
    <location>
        <begin position="58"/>
        <end position="78"/>
    </location>
</feature>
<feature type="transmembrane region" description="Helical" evidence="2">
    <location>
        <begin position="143"/>
        <end position="163"/>
    </location>
</feature>
<feature type="transmembrane region" description="Helical" evidence="2">
    <location>
        <begin position="171"/>
        <end position="191"/>
    </location>
</feature>
<feature type="transmembrane region" description="Helical" evidence="2">
    <location>
        <begin position="206"/>
        <end position="226"/>
    </location>
</feature>
<feature type="transmembrane region" description="Helical" evidence="2">
    <location>
        <begin position="241"/>
        <end position="261"/>
    </location>
</feature>
<feature type="transmembrane region" description="Helical" evidence="2">
    <location>
        <begin position="276"/>
        <end position="296"/>
    </location>
</feature>
<feature type="transmembrane region" description="Helical" evidence="2">
    <location>
        <begin position="301"/>
        <end position="321"/>
    </location>
</feature>
<feature type="transmembrane region" description="Helical" evidence="2">
    <location>
        <begin position="325"/>
        <end position="345"/>
    </location>
</feature>
<feature type="transmembrane region" description="Helical" evidence="2">
    <location>
        <begin position="369"/>
        <end position="389"/>
    </location>
</feature>
<feature type="transmembrane region" description="Helical" evidence="2">
    <location>
        <begin position="412"/>
        <end position="432"/>
    </location>
</feature>
<feature type="region of interest" description="Disordered" evidence="3">
    <location>
        <begin position="478"/>
        <end position="498"/>
    </location>
</feature>
<feature type="compositionally biased region" description="Polar residues" evidence="3">
    <location>
        <begin position="487"/>
        <end position="498"/>
    </location>
</feature>
<reference key="1">
    <citation type="journal article" date="2003" name="Plant Cell Physiol.">
        <title>Constitutive expression of a novel-type ammonium transporter OsAMT2 in rice plants.</title>
        <authorList>
            <person name="Suenaga A."/>
            <person name="Moriya K."/>
            <person name="Sonoda Y."/>
            <person name="Ikeda A."/>
            <person name="von Wiren N."/>
            <person name="Hayakawa T."/>
            <person name="Yamaguchi J."/>
            <person name="Yamaya T."/>
        </authorList>
    </citation>
    <scope>NUCLEOTIDE SEQUENCE [MRNA]</scope>
    <source>
        <strain>cv. Sasanishiki</strain>
        <tissue>Root</tissue>
    </source>
</reference>
<reference key="2">
    <citation type="journal article" date="2005" name="Nature">
        <title>The map-based sequence of the rice genome.</title>
        <authorList>
            <consortium name="International rice genome sequencing project (IRGSP)"/>
        </authorList>
    </citation>
    <scope>NUCLEOTIDE SEQUENCE [LARGE SCALE GENOMIC DNA]</scope>
    <source>
        <strain>cv. Nipponbare</strain>
    </source>
</reference>
<reference key="3">
    <citation type="journal article" date="2008" name="Nucleic Acids Res.">
        <title>The rice annotation project database (RAP-DB): 2008 update.</title>
        <authorList>
            <consortium name="The rice annotation project (RAP)"/>
        </authorList>
    </citation>
    <scope>GENOME REANNOTATION</scope>
    <source>
        <strain>cv. Nipponbare</strain>
    </source>
</reference>
<reference key="4">
    <citation type="journal article" date="2013" name="Rice">
        <title>Improvement of the Oryza sativa Nipponbare reference genome using next generation sequence and optical map data.</title>
        <authorList>
            <person name="Kawahara Y."/>
            <person name="de la Bastide M."/>
            <person name="Hamilton J.P."/>
            <person name="Kanamori H."/>
            <person name="McCombie W.R."/>
            <person name="Ouyang S."/>
            <person name="Schwartz D.C."/>
            <person name="Tanaka T."/>
            <person name="Wu J."/>
            <person name="Zhou S."/>
            <person name="Childs K.L."/>
            <person name="Davidson R.M."/>
            <person name="Lin H."/>
            <person name="Quesada-Ocampo L."/>
            <person name="Vaillancourt B."/>
            <person name="Sakai H."/>
            <person name="Lee S.S."/>
            <person name="Kim J."/>
            <person name="Numa H."/>
            <person name="Itoh T."/>
            <person name="Buell C.R."/>
            <person name="Matsumoto T."/>
        </authorList>
    </citation>
    <scope>GENOME REANNOTATION</scope>
    <source>
        <strain>cv. Nipponbare</strain>
    </source>
</reference>
<reference key="5">
    <citation type="journal article" date="2005" name="PLoS Biol.">
        <title>The genomes of Oryza sativa: a history of duplications.</title>
        <authorList>
            <person name="Yu J."/>
            <person name="Wang J."/>
            <person name="Lin W."/>
            <person name="Li S."/>
            <person name="Li H."/>
            <person name="Zhou J."/>
            <person name="Ni P."/>
            <person name="Dong W."/>
            <person name="Hu S."/>
            <person name="Zeng C."/>
            <person name="Zhang J."/>
            <person name="Zhang Y."/>
            <person name="Li R."/>
            <person name="Xu Z."/>
            <person name="Li S."/>
            <person name="Li X."/>
            <person name="Zheng H."/>
            <person name="Cong L."/>
            <person name="Lin L."/>
            <person name="Yin J."/>
            <person name="Geng J."/>
            <person name="Li G."/>
            <person name="Shi J."/>
            <person name="Liu J."/>
            <person name="Lv H."/>
            <person name="Li J."/>
            <person name="Wang J."/>
            <person name="Deng Y."/>
            <person name="Ran L."/>
            <person name="Shi X."/>
            <person name="Wang X."/>
            <person name="Wu Q."/>
            <person name="Li C."/>
            <person name="Ren X."/>
            <person name="Wang J."/>
            <person name="Wang X."/>
            <person name="Li D."/>
            <person name="Liu D."/>
            <person name="Zhang X."/>
            <person name="Ji Z."/>
            <person name="Zhao W."/>
            <person name="Sun Y."/>
            <person name="Zhang Z."/>
            <person name="Bao J."/>
            <person name="Han Y."/>
            <person name="Dong L."/>
            <person name="Ji J."/>
            <person name="Chen P."/>
            <person name="Wu S."/>
            <person name="Liu J."/>
            <person name="Xiao Y."/>
            <person name="Bu D."/>
            <person name="Tan J."/>
            <person name="Yang L."/>
            <person name="Ye C."/>
            <person name="Zhang J."/>
            <person name="Xu J."/>
            <person name="Zhou Y."/>
            <person name="Yu Y."/>
            <person name="Zhang B."/>
            <person name="Zhuang S."/>
            <person name="Wei H."/>
            <person name="Liu B."/>
            <person name="Lei M."/>
            <person name="Yu H."/>
            <person name="Li Y."/>
            <person name="Xu H."/>
            <person name="Wei S."/>
            <person name="He X."/>
            <person name="Fang L."/>
            <person name="Zhang Z."/>
            <person name="Zhang Y."/>
            <person name="Huang X."/>
            <person name="Su Z."/>
            <person name="Tong W."/>
            <person name="Li J."/>
            <person name="Tong Z."/>
            <person name="Li S."/>
            <person name="Ye J."/>
            <person name="Wang L."/>
            <person name="Fang L."/>
            <person name="Lei T."/>
            <person name="Chen C.-S."/>
            <person name="Chen H.-C."/>
            <person name="Xu Z."/>
            <person name="Li H."/>
            <person name="Huang H."/>
            <person name="Zhang F."/>
            <person name="Xu H."/>
            <person name="Li N."/>
            <person name="Zhao C."/>
            <person name="Li S."/>
            <person name="Dong L."/>
            <person name="Huang Y."/>
            <person name="Li L."/>
            <person name="Xi Y."/>
            <person name="Qi Q."/>
            <person name="Li W."/>
            <person name="Zhang B."/>
            <person name="Hu W."/>
            <person name="Zhang Y."/>
            <person name="Tian X."/>
            <person name="Jiao Y."/>
            <person name="Liang X."/>
            <person name="Jin J."/>
            <person name="Gao L."/>
            <person name="Zheng W."/>
            <person name="Hao B."/>
            <person name="Liu S.-M."/>
            <person name="Wang W."/>
            <person name="Yuan L."/>
            <person name="Cao M."/>
            <person name="McDermott J."/>
            <person name="Samudrala R."/>
            <person name="Wang J."/>
            <person name="Wong G.K.-S."/>
            <person name="Yang H."/>
        </authorList>
    </citation>
    <scope>NUCLEOTIDE SEQUENCE [LARGE SCALE GENOMIC DNA]</scope>
    <source>
        <strain>cv. Nipponbare</strain>
    </source>
</reference>
<reference key="6">
    <citation type="journal article" date="2003" name="Science">
        <title>Collection, mapping, and annotation of over 28,000 cDNA clones from japonica rice.</title>
        <authorList>
            <consortium name="The rice full-length cDNA consortium"/>
        </authorList>
    </citation>
    <scope>NUCLEOTIDE SEQUENCE [LARGE SCALE MRNA]</scope>
    <source>
        <strain>cv. Nipponbare</strain>
    </source>
</reference>
<sequence>MSGDAFNMSVAYQPSGMAVPEWLNKGDNAWQMISATLVGMQSVPGLVILYGSIVKKKWAVNSAFMALYAFAAVWLCWVTWGYNMSFGHKLLPFWGKARPALGQSFLLAQAVLPQTTQFYKGGGGADAVVETPWVNPLYPMATMVYFQCVFAAITLILLAGSLLGRMNIKAWMLFVPLWLTFSYTVGAFSLWGGGFLFHWGVMDYSGGYVIHLSSGVAGFTAAYWVGPRSTKDRERFPPNNVLLMLTGAGILWMGWAGFNGGDPYSANIDSSLAVLNTNICAATSLLVWTCLDVIFFKKPSVIGAVQGMITGLVCITPGAGLVQGWAAIVMGILSGSIPWFTMMVVHKRSRLLQQVDDTLGVFHTHAVAGFLGGATTGLFAEPVLCSLFLPVTNSRGAFYPGRGGGLQFVRQVAGALFIICWNVVVTSLVCLAVRAVVPLRMPEEELAIGDDAVHGEEAYALWGDGEKYDSTKHGWYSDNNDTHHNNNKAAPSGVTQNV</sequence>
<gene>
    <name type="primary">AMT3-1</name>
    <name type="ordered locus">Os01g0870300</name>
    <name type="ordered locus">LOC_Os01g65000</name>
    <name type="ORF">OsJ_04233</name>
</gene>
<name>AMT31_ORYSJ</name>
<protein>
    <recommendedName>
        <fullName>Ammonium transporter 3 member 1</fullName>
        <shortName>OsAMT3;1</shortName>
    </recommendedName>
</protein>
<evidence type="ECO:0000250" key="1"/>
<evidence type="ECO:0000255" key="2"/>
<evidence type="ECO:0000256" key="3">
    <source>
        <dbReference type="SAM" id="MobiDB-lite"/>
    </source>
</evidence>
<evidence type="ECO:0000305" key="4"/>
<proteinExistence type="evidence at transcript level"/>